<organism>
    <name type="scientific">Escherichia coli O1:K1 / APEC</name>
    <dbReference type="NCBI Taxonomy" id="405955"/>
    <lineage>
        <taxon>Bacteria</taxon>
        <taxon>Pseudomonadati</taxon>
        <taxon>Pseudomonadota</taxon>
        <taxon>Gammaproteobacteria</taxon>
        <taxon>Enterobacterales</taxon>
        <taxon>Enterobacteriaceae</taxon>
        <taxon>Escherichia</taxon>
    </lineage>
</organism>
<feature type="chain" id="PRO_1000044713" description="UPF0761 membrane protein YihY">
    <location>
        <begin position="1"/>
        <end position="290"/>
    </location>
</feature>
<feature type="transmembrane region" description="Helical" evidence="1">
    <location>
        <begin position="44"/>
        <end position="64"/>
    </location>
</feature>
<feature type="transmembrane region" description="Helical" evidence="1">
    <location>
        <begin position="104"/>
        <end position="124"/>
    </location>
</feature>
<feature type="transmembrane region" description="Helical" evidence="1">
    <location>
        <begin position="140"/>
        <end position="160"/>
    </location>
</feature>
<feature type="transmembrane region" description="Helical" evidence="1">
    <location>
        <begin position="183"/>
        <end position="203"/>
    </location>
</feature>
<feature type="transmembrane region" description="Helical" evidence="1">
    <location>
        <begin position="210"/>
        <end position="230"/>
    </location>
</feature>
<feature type="transmembrane region" description="Helical" evidence="1">
    <location>
        <begin position="244"/>
        <end position="264"/>
    </location>
</feature>
<reference key="1">
    <citation type="journal article" date="2007" name="J. Bacteriol.">
        <title>The genome sequence of avian pathogenic Escherichia coli strain O1:K1:H7 shares strong similarities with human extraintestinal pathogenic E. coli genomes.</title>
        <authorList>
            <person name="Johnson T.J."/>
            <person name="Kariyawasam S."/>
            <person name="Wannemuehler Y."/>
            <person name="Mangiamele P."/>
            <person name="Johnson S.J."/>
            <person name="Doetkott C."/>
            <person name="Skyberg J.A."/>
            <person name="Lynne A.M."/>
            <person name="Johnson J.R."/>
            <person name="Nolan L.K."/>
        </authorList>
    </citation>
    <scope>NUCLEOTIDE SEQUENCE [LARGE SCALE GENOMIC DNA]</scope>
</reference>
<proteinExistence type="inferred from homology"/>
<dbReference type="EMBL" id="CP000468">
    <property type="protein sequence ID" value="ABJ03353.1"/>
    <property type="molecule type" value="Genomic_DNA"/>
</dbReference>
<dbReference type="RefSeq" id="WP_000920754.1">
    <property type="nucleotide sequence ID" value="NZ_CADILS010000014.1"/>
</dbReference>
<dbReference type="KEGG" id="ecv:APECO1_2581"/>
<dbReference type="HOGENOM" id="CLU_032288_0_0_6"/>
<dbReference type="Proteomes" id="UP000008216">
    <property type="component" value="Chromosome"/>
</dbReference>
<dbReference type="GO" id="GO:0005886">
    <property type="term" value="C:plasma membrane"/>
    <property type="evidence" value="ECO:0007669"/>
    <property type="project" value="UniProtKB-SubCell"/>
</dbReference>
<dbReference type="HAMAP" id="MF_00672">
    <property type="entry name" value="UPF0761"/>
    <property type="match status" value="1"/>
</dbReference>
<dbReference type="InterPro" id="IPR023679">
    <property type="entry name" value="UPF0761_bac"/>
</dbReference>
<dbReference type="InterPro" id="IPR017039">
    <property type="entry name" value="Virul_fac_BrkB"/>
</dbReference>
<dbReference type="NCBIfam" id="NF002457">
    <property type="entry name" value="PRK01637.1"/>
    <property type="match status" value="1"/>
</dbReference>
<dbReference type="NCBIfam" id="TIGR00765">
    <property type="entry name" value="yihY_not_rbn"/>
    <property type="match status" value="1"/>
</dbReference>
<dbReference type="PANTHER" id="PTHR30213">
    <property type="entry name" value="INNER MEMBRANE PROTEIN YHJD"/>
    <property type="match status" value="1"/>
</dbReference>
<dbReference type="PANTHER" id="PTHR30213:SF0">
    <property type="entry name" value="UPF0761 MEMBRANE PROTEIN YIHY"/>
    <property type="match status" value="1"/>
</dbReference>
<dbReference type="Pfam" id="PF03631">
    <property type="entry name" value="Virul_fac_BrkB"/>
    <property type="match status" value="1"/>
</dbReference>
<dbReference type="PIRSF" id="PIRSF035875">
    <property type="entry name" value="RNase_BN"/>
    <property type="match status" value="1"/>
</dbReference>
<gene>
    <name evidence="1" type="primary">yihY</name>
    <name type="ordered locus">Ecok1_38590</name>
    <name type="ORF">APECO1_2581</name>
</gene>
<protein>
    <recommendedName>
        <fullName evidence="1">UPF0761 membrane protein YihY</fullName>
    </recommendedName>
</protein>
<comment type="subcellular location">
    <subcellularLocation>
        <location evidence="1">Cell inner membrane</location>
        <topology evidence="1">Multi-pass membrane protein</topology>
    </subcellularLocation>
</comment>
<comment type="similarity">
    <text evidence="1">Belongs to the UPF0761 family.</text>
</comment>
<accession>A1AI63</accession>
<evidence type="ECO:0000255" key="1">
    <source>
        <dbReference type="HAMAP-Rule" id="MF_00672"/>
    </source>
</evidence>
<keyword id="KW-0997">Cell inner membrane</keyword>
<keyword id="KW-1003">Cell membrane</keyword>
<keyword id="KW-0472">Membrane</keyword>
<keyword id="KW-1185">Reference proteome</keyword>
<keyword id="KW-0812">Transmembrane</keyword>
<keyword id="KW-1133">Transmembrane helix</keyword>
<sequence>MLKTIQDKARHRTRPLWAWLKLLWQRIDEDNMTTLAGNLAYVSLLSLVPLVAVVFALFAAFPMFSDVSIQLRHFIFANFLPATGDVIQRYIEQFVANSNKMTAVGACGLIVTALLLMYSIDSALNTIWRSKRARPKIYSFAVYWMILTLGPLLAGASLAISAYLLSLRWASDLNTVIDNVLRIFPLLLSWISFWLLYSIVPTIRVPNRDAIVGAFVAALLFEAGKKGFALYITMFPSYQLIYGVLAVIPILFVWVYWTWCIVLLGAEITVTLGEYRKLKQAAEQEEDDEP</sequence>
<name>YIHY_ECOK1</name>